<feature type="chain" id="PRO_1000141022" description="Small ribosomal subunit protein uS3">
    <location>
        <begin position="1"/>
        <end position="217"/>
    </location>
</feature>
<feature type="domain" description="KH type-2" evidence="1">
    <location>
        <begin position="38"/>
        <end position="106"/>
    </location>
</feature>
<reference key="1">
    <citation type="journal article" date="2010" name="Genome Biol.">
        <title>Structure and dynamics of the pan-genome of Streptococcus pneumoniae and closely related species.</title>
        <authorList>
            <person name="Donati C."/>
            <person name="Hiller N.L."/>
            <person name="Tettelin H."/>
            <person name="Muzzi A."/>
            <person name="Croucher N.J."/>
            <person name="Angiuoli S.V."/>
            <person name="Oggioni M."/>
            <person name="Dunning Hotopp J.C."/>
            <person name="Hu F.Z."/>
            <person name="Riley D.R."/>
            <person name="Covacci A."/>
            <person name="Mitchell T.J."/>
            <person name="Bentley S.D."/>
            <person name="Kilian M."/>
            <person name="Ehrlich G.D."/>
            <person name="Rappuoli R."/>
            <person name="Moxon E.R."/>
            <person name="Masignani V."/>
        </authorList>
    </citation>
    <scope>NUCLEOTIDE SEQUENCE [LARGE SCALE GENOMIC DNA]</scope>
    <source>
        <strain>Hungary19A-6</strain>
    </source>
</reference>
<sequence length="217" mass="24046">MGQKVHPIGMRVGIIRDWDAKWYAEKEYADYLHEDLAIRKFVQKELADAAVSTIEIERAVNKVNVSLHTAKPGMVIGKGGANVDALRAKLNKLTGKQVHINIIEIKQPDLDAHLVGEGIARQLEQRVAFRRAQKQAIQRAMRAGAKGIKTQVSGRLNGADIARAEGYSEGTVPLHTLRADIDYAWEEADTTYGKLGVKVWIYRGEVLPARKNTKGGK</sequence>
<keyword id="KW-0687">Ribonucleoprotein</keyword>
<keyword id="KW-0689">Ribosomal protein</keyword>
<keyword id="KW-0694">RNA-binding</keyword>
<keyword id="KW-0699">rRNA-binding</keyword>
<gene>
    <name evidence="1" type="primary">rpsC</name>
    <name type="ordered locus">SPH_0329</name>
</gene>
<accession>B1I8K4</accession>
<dbReference type="EMBL" id="CP000936">
    <property type="protein sequence ID" value="ACA37486.1"/>
    <property type="molecule type" value="Genomic_DNA"/>
</dbReference>
<dbReference type="RefSeq" id="WP_000529936.1">
    <property type="nucleotide sequence ID" value="NC_010380.1"/>
</dbReference>
<dbReference type="SMR" id="B1I8K4"/>
<dbReference type="GeneID" id="49600535"/>
<dbReference type="KEGG" id="spv:SPH_0329"/>
<dbReference type="HOGENOM" id="CLU_058591_0_2_9"/>
<dbReference type="Proteomes" id="UP000002163">
    <property type="component" value="Chromosome"/>
</dbReference>
<dbReference type="GO" id="GO:0022627">
    <property type="term" value="C:cytosolic small ribosomal subunit"/>
    <property type="evidence" value="ECO:0007669"/>
    <property type="project" value="TreeGrafter"/>
</dbReference>
<dbReference type="GO" id="GO:0003729">
    <property type="term" value="F:mRNA binding"/>
    <property type="evidence" value="ECO:0007669"/>
    <property type="project" value="UniProtKB-UniRule"/>
</dbReference>
<dbReference type="GO" id="GO:0019843">
    <property type="term" value="F:rRNA binding"/>
    <property type="evidence" value="ECO:0007669"/>
    <property type="project" value="UniProtKB-UniRule"/>
</dbReference>
<dbReference type="GO" id="GO:0003735">
    <property type="term" value="F:structural constituent of ribosome"/>
    <property type="evidence" value="ECO:0007669"/>
    <property type="project" value="InterPro"/>
</dbReference>
<dbReference type="GO" id="GO:0006412">
    <property type="term" value="P:translation"/>
    <property type="evidence" value="ECO:0007669"/>
    <property type="project" value="UniProtKB-UniRule"/>
</dbReference>
<dbReference type="CDD" id="cd02412">
    <property type="entry name" value="KH-II_30S_S3"/>
    <property type="match status" value="1"/>
</dbReference>
<dbReference type="FunFam" id="3.30.1140.32:FF:000001">
    <property type="entry name" value="30S ribosomal protein S3"/>
    <property type="match status" value="1"/>
</dbReference>
<dbReference type="FunFam" id="3.30.300.20:FF:000001">
    <property type="entry name" value="30S ribosomal protein S3"/>
    <property type="match status" value="1"/>
</dbReference>
<dbReference type="Gene3D" id="3.30.300.20">
    <property type="match status" value="1"/>
</dbReference>
<dbReference type="Gene3D" id="3.30.1140.32">
    <property type="entry name" value="Ribosomal protein S3, C-terminal domain"/>
    <property type="match status" value="1"/>
</dbReference>
<dbReference type="HAMAP" id="MF_01309_B">
    <property type="entry name" value="Ribosomal_uS3_B"/>
    <property type="match status" value="1"/>
</dbReference>
<dbReference type="InterPro" id="IPR004087">
    <property type="entry name" value="KH_dom"/>
</dbReference>
<dbReference type="InterPro" id="IPR015946">
    <property type="entry name" value="KH_dom-like_a/b"/>
</dbReference>
<dbReference type="InterPro" id="IPR004044">
    <property type="entry name" value="KH_dom_type_2"/>
</dbReference>
<dbReference type="InterPro" id="IPR009019">
    <property type="entry name" value="KH_sf_prok-type"/>
</dbReference>
<dbReference type="InterPro" id="IPR036419">
    <property type="entry name" value="Ribosomal_S3_C_sf"/>
</dbReference>
<dbReference type="InterPro" id="IPR005704">
    <property type="entry name" value="Ribosomal_uS3_bac-typ"/>
</dbReference>
<dbReference type="InterPro" id="IPR001351">
    <property type="entry name" value="Ribosomal_uS3_C"/>
</dbReference>
<dbReference type="InterPro" id="IPR018280">
    <property type="entry name" value="Ribosomal_uS3_CS"/>
</dbReference>
<dbReference type="NCBIfam" id="TIGR01009">
    <property type="entry name" value="rpsC_bact"/>
    <property type="match status" value="1"/>
</dbReference>
<dbReference type="PANTHER" id="PTHR11760">
    <property type="entry name" value="30S/40S RIBOSOMAL PROTEIN S3"/>
    <property type="match status" value="1"/>
</dbReference>
<dbReference type="PANTHER" id="PTHR11760:SF19">
    <property type="entry name" value="SMALL RIBOSOMAL SUBUNIT PROTEIN US3C"/>
    <property type="match status" value="1"/>
</dbReference>
<dbReference type="Pfam" id="PF07650">
    <property type="entry name" value="KH_2"/>
    <property type="match status" value="1"/>
</dbReference>
<dbReference type="Pfam" id="PF00189">
    <property type="entry name" value="Ribosomal_S3_C"/>
    <property type="match status" value="1"/>
</dbReference>
<dbReference type="SMART" id="SM00322">
    <property type="entry name" value="KH"/>
    <property type="match status" value="1"/>
</dbReference>
<dbReference type="SUPFAM" id="SSF54814">
    <property type="entry name" value="Prokaryotic type KH domain (KH-domain type II)"/>
    <property type="match status" value="1"/>
</dbReference>
<dbReference type="SUPFAM" id="SSF54821">
    <property type="entry name" value="Ribosomal protein S3 C-terminal domain"/>
    <property type="match status" value="1"/>
</dbReference>
<dbReference type="PROSITE" id="PS50823">
    <property type="entry name" value="KH_TYPE_2"/>
    <property type="match status" value="1"/>
</dbReference>
<dbReference type="PROSITE" id="PS00548">
    <property type="entry name" value="RIBOSOMAL_S3"/>
    <property type="match status" value="1"/>
</dbReference>
<evidence type="ECO:0000255" key="1">
    <source>
        <dbReference type="HAMAP-Rule" id="MF_01309"/>
    </source>
</evidence>
<evidence type="ECO:0000305" key="2"/>
<protein>
    <recommendedName>
        <fullName evidence="1">Small ribosomal subunit protein uS3</fullName>
    </recommendedName>
    <alternativeName>
        <fullName evidence="2">30S ribosomal protein S3</fullName>
    </alternativeName>
</protein>
<comment type="function">
    <text evidence="1">Binds the lower part of the 30S subunit head. Binds mRNA in the 70S ribosome, positioning it for translation.</text>
</comment>
<comment type="subunit">
    <text evidence="1">Part of the 30S ribosomal subunit. Forms a tight complex with proteins S10 and S14.</text>
</comment>
<comment type="similarity">
    <text evidence="1">Belongs to the universal ribosomal protein uS3 family.</text>
</comment>
<proteinExistence type="inferred from homology"/>
<name>RS3_STRPI</name>
<organism>
    <name type="scientific">Streptococcus pneumoniae (strain Hungary19A-6)</name>
    <dbReference type="NCBI Taxonomy" id="487214"/>
    <lineage>
        <taxon>Bacteria</taxon>
        <taxon>Bacillati</taxon>
        <taxon>Bacillota</taxon>
        <taxon>Bacilli</taxon>
        <taxon>Lactobacillales</taxon>
        <taxon>Streptococcaceae</taxon>
        <taxon>Streptococcus</taxon>
    </lineage>
</organism>